<comment type="function">
    <text evidence="1">Chemotactic for interleukin-activated T-cells but not unstimulated T-cells, neutrophils or monocytes. Induces calcium release in activated T-cells. Binds to CXCR3. May play an important role in CNS diseases which involve T-cell recruitment. May play a role in skin immune responses (By similarity).</text>
</comment>
<comment type="subunit">
    <text evidence="2">Interacts with TNFAIP6 (via Link domain).</text>
</comment>
<comment type="subcellular location">
    <subcellularLocation>
        <location>Secreted</location>
    </subcellularLocation>
</comment>
<comment type="similarity">
    <text evidence="3">Belongs to the intercrine alpha (chemokine CxC) family.</text>
</comment>
<feature type="signal peptide" evidence="1">
    <location>
        <begin position="1"/>
        <end position="21"/>
    </location>
</feature>
<feature type="chain" id="PRO_0000005107" description="C-X-C motif chemokine 11">
    <location>
        <begin position="22"/>
        <end position="100"/>
    </location>
</feature>
<feature type="disulfide bond" evidence="1">
    <location>
        <begin position="30"/>
        <end position="57"/>
    </location>
</feature>
<feature type="disulfide bond" evidence="1">
    <location>
        <begin position="32"/>
        <end position="74"/>
    </location>
</feature>
<name>CXL11_MOUSE</name>
<dbReference type="EMBL" id="AF178672">
    <property type="protein sequence ID" value="AAF79048.1"/>
    <property type="molecule type" value="mRNA"/>
</dbReference>
<dbReference type="EMBL" id="AF167354">
    <property type="protein sequence ID" value="AAF71824.1"/>
    <property type="molecule type" value="Genomic_DNA"/>
</dbReference>
<dbReference type="EMBL" id="AF179872">
    <property type="protein sequence ID" value="AAF77095.1"/>
    <property type="molecule type" value="mRNA"/>
</dbReference>
<dbReference type="EMBL" id="AF136449">
    <property type="protein sequence ID" value="AAF79022.1"/>
    <property type="molecule type" value="mRNA"/>
</dbReference>
<dbReference type="RefSeq" id="NP_062367.1">
    <property type="nucleotide sequence ID" value="NM_019494.1"/>
</dbReference>
<dbReference type="SMR" id="Q9JHH5"/>
<dbReference type="FunCoup" id="Q9JHH5">
    <property type="interactions" value="890"/>
</dbReference>
<dbReference type="PhosphoSitePlus" id="Q9JHH5"/>
<dbReference type="DNASU" id="56066"/>
<dbReference type="GeneID" id="56066"/>
<dbReference type="KEGG" id="mmu:56066"/>
<dbReference type="AGR" id="MGI:1860203"/>
<dbReference type="CTD" id="6373"/>
<dbReference type="MGI" id="MGI:1860203">
    <property type="gene designation" value="Cxcl11"/>
</dbReference>
<dbReference type="InParanoid" id="Q9JHH5"/>
<dbReference type="PhylomeDB" id="Q9JHH5"/>
<dbReference type="Reactome" id="R-MMU-380108">
    <property type="pathway name" value="Chemokine receptors bind chemokines"/>
</dbReference>
<dbReference type="Reactome" id="R-MMU-418594">
    <property type="pathway name" value="G alpha (i) signalling events"/>
</dbReference>
<dbReference type="BioGRID-ORCS" id="56066">
    <property type="hits" value="1 hit in 24 CRISPR screens"/>
</dbReference>
<dbReference type="PRO" id="PR:Q9JHH5"/>
<dbReference type="Proteomes" id="UP000000589">
    <property type="component" value="Unplaced"/>
</dbReference>
<dbReference type="RNAct" id="Q9JHH5">
    <property type="molecule type" value="protein"/>
</dbReference>
<dbReference type="GO" id="GO:0005615">
    <property type="term" value="C:extracellular space"/>
    <property type="evidence" value="ECO:0007669"/>
    <property type="project" value="UniProtKB-KW"/>
</dbReference>
<dbReference type="GO" id="GO:0008009">
    <property type="term" value="F:chemokine activity"/>
    <property type="evidence" value="ECO:0000250"/>
    <property type="project" value="UniProtKB"/>
</dbReference>
<dbReference type="GO" id="GO:0048248">
    <property type="term" value="F:CXCR3 chemokine receptor binding"/>
    <property type="evidence" value="ECO:0000250"/>
    <property type="project" value="UniProtKB"/>
</dbReference>
<dbReference type="GO" id="GO:0007189">
    <property type="term" value="P:adenylate cyclase-activating G protein-coupled receptor signaling pathway"/>
    <property type="evidence" value="ECO:0000250"/>
    <property type="project" value="UniProtKB"/>
</dbReference>
<dbReference type="GO" id="GO:0006935">
    <property type="term" value="P:chemotaxis"/>
    <property type="evidence" value="ECO:0000250"/>
    <property type="project" value="UniProtKB"/>
</dbReference>
<dbReference type="GO" id="GO:0006955">
    <property type="term" value="P:immune response"/>
    <property type="evidence" value="ECO:0007669"/>
    <property type="project" value="InterPro"/>
</dbReference>
<dbReference type="GO" id="GO:0006954">
    <property type="term" value="P:inflammatory response"/>
    <property type="evidence" value="ECO:0007669"/>
    <property type="project" value="UniProtKB-KW"/>
</dbReference>
<dbReference type="GO" id="GO:0051281">
    <property type="term" value="P:positive regulation of release of sequestered calcium ion into cytosol"/>
    <property type="evidence" value="ECO:0000250"/>
    <property type="project" value="UniProtKB"/>
</dbReference>
<dbReference type="GO" id="GO:0042127">
    <property type="term" value="P:regulation of cell population proliferation"/>
    <property type="evidence" value="ECO:0000250"/>
    <property type="project" value="UniProtKB"/>
</dbReference>
<dbReference type="CDD" id="cd00273">
    <property type="entry name" value="Chemokine_CXC"/>
    <property type="match status" value="1"/>
</dbReference>
<dbReference type="FunFam" id="2.40.50.40:FF:000004">
    <property type="entry name" value="C-X-C motif chemokine"/>
    <property type="match status" value="1"/>
</dbReference>
<dbReference type="Gene3D" id="2.40.50.40">
    <property type="match status" value="1"/>
</dbReference>
<dbReference type="InterPro" id="IPR039809">
    <property type="entry name" value="Chemokine_b/g/d"/>
</dbReference>
<dbReference type="InterPro" id="IPR001089">
    <property type="entry name" value="Chemokine_CXC"/>
</dbReference>
<dbReference type="InterPro" id="IPR018048">
    <property type="entry name" value="Chemokine_CXC_CS"/>
</dbReference>
<dbReference type="InterPro" id="IPR001811">
    <property type="entry name" value="Chemokine_IL8-like_dom"/>
</dbReference>
<dbReference type="InterPro" id="IPR033899">
    <property type="entry name" value="CXC_Chemokine_domain"/>
</dbReference>
<dbReference type="InterPro" id="IPR036048">
    <property type="entry name" value="Interleukin_8-like_sf"/>
</dbReference>
<dbReference type="PANTHER" id="PTHR12015:SF191">
    <property type="entry name" value="C-X-C MOTIF CHEMOKINE 11"/>
    <property type="match status" value="1"/>
</dbReference>
<dbReference type="PANTHER" id="PTHR12015">
    <property type="entry name" value="SMALL INDUCIBLE CYTOKINE A"/>
    <property type="match status" value="1"/>
</dbReference>
<dbReference type="Pfam" id="PF00048">
    <property type="entry name" value="IL8"/>
    <property type="match status" value="1"/>
</dbReference>
<dbReference type="PRINTS" id="PR00436">
    <property type="entry name" value="INTERLEUKIN8"/>
</dbReference>
<dbReference type="PRINTS" id="PR00437">
    <property type="entry name" value="SMALLCYTKCXC"/>
</dbReference>
<dbReference type="SMART" id="SM00199">
    <property type="entry name" value="SCY"/>
    <property type="match status" value="1"/>
</dbReference>
<dbReference type="SUPFAM" id="SSF54117">
    <property type="entry name" value="Interleukin 8-like chemokines"/>
    <property type="match status" value="1"/>
</dbReference>
<dbReference type="PROSITE" id="PS00471">
    <property type="entry name" value="SMALL_CYTOKINES_CXC"/>
    <property type="match status" value="1"/>
</dbReference>
<reference key="1">
    <citation type="journal article" date="2000" name="Cytogenet. Cell Genet.">
        <title>Cloning, genomic sequence, and chromosome mapping of scyb11, the murine homologue of SCYB11 (alias betaR1/H174/SCYB9B/I-TAC/IP-9/CXCL11).</title>
        <authorList>
            <person name="Meyer M."/>
            <person name="Erdel M."/>
            <person name="Duba H.C."/>
            <person name="Werner E.R."/>
            <person name="Werner-Felmayer G."/>
        </authorList>
    </citation>
    <scope>NUCLEOTIDE SEQUENCE [GENOMIC DNA]</scope>
</reference>
<reference key="2">
    <citation type="journal article" date="2000" name="J. Immunol.">
        <title>The murine chemokine CXCL11 (IFN-inducible T cell alpha chemoattractant) is an IFN-gamma- and lipopolysaccharide-inducible glucocorticoid-attenuated response gene expressed in lung and other tissues during endotoxemia.</title>
        <authorList>
            <person name="Widney D.P."/>
            <person name="Xia Y.-R."/>
            <person name="Lusis A.J."/>
            <person name="Smith J.B."/>
        </authorList>
    </citation>
    <scope>NUCLEOTIDE SEQUENCE</scope>
</reference>
<keyword id="KW-0145">Chemotaxis</keyword>
<keyword id="KW-0202">Cytokine</keyword>
<keyword id="KW-1015">Disulfide bond</keyword>
<keyword id="KW-0395">Inflammatory response</keyword>
<keyword id="KW-1185">Reference proteome</keyword>
<keyword id="KW-0964">Secreted</keyword>
<keyword id="KW-0732">Signal</keyword>
<proteinExistence type="inferred from homology"/>
<sequence length="100" mass="11266">MNRKVTAIALAAIIWATAAQGFLMFKQGRCLCIGPGMKAVKMAEIEKASVIYPSNGCDKVEVIVTMKAHKRQRCLDPRSKQARLIMQAIEKKNFLRRQNM</sequence>
<accession>Q9JHH5</accession>
<organism>
    <name type="scientific">Mus musculus</name>
    <name type="common">Mouse</name>
    <dbReference type="NCBI Taxonomy" id="10090"/>
    <lineage>
        <taxon>Eukaryota</taxon>
        <taxon>Metazoa</taxon>
        <taxon>Chordata</taxon>
        <taxon>Craniata</taxon>
        <taxon>Vertebrata</taxon>
        <taxon>Euteleostomi</taxon>
        <taxon>Mammalia</taxon>
        <taxon>Eutheria</taxon>
        <taxon>Euarchontoglires</taxon>
        <taxon>Glires</taxon>
        <taxon>Rodentia</taxon>
        <taxon>Myomorpha</taxon>
        <taxon>Muroidea</taxon>
        <taxon>Muridae</taxon>
        <taxon>Murinae</taxon>
        <taxon>Mus</taxon>
        <taxon>Mus</taxon>
    </lineage>
</organism>
<protein>
    <recommendedName>
        <fullName>C-X-C motif chemokine 11</fullName>
    </recommendedName>
    <alternativeName>
        <fullName>Interferon-inducible T-cell alpha chemoattractant</fullName>
        <shortName>I-TAC</shortName>
    </alternativeName>
    <alternativeName>
        <fullName>Small-inducible cytokine B11</fullName>
    </alternativeName>
</protein>
<gene>
    <name type="primary">Cxcl11</name>
    <name type="synonym">Scyb11</name>
</gene>
<evidence type="ECO:0000250" key="1"/>
<evidence type="ECO:0000250" key="2">
    <source>
        <dbReference type="UniProtKB" id="O14625"/>
    </source>
</evidence>
<evidence type="ECO:0000305" key="3"/>